<organism>
    <name type="scientific">Protochlamydia amoebophila (strain UWE25)</name>
    <dbReference type="NCBI Taxonomy" id="264201"/>
    <lineage>
        <taxon>Bacteria</taxon>
        <taxon>Pseudomonadati</taxon>
        <taxon>Chlamydiota</taxon>
        <taxon>Chlamydiia</taxon>
        <taxon>Parachlamydiales</taxon>
        <taxon>Parachlamydiaceae</taxon>
        <taxon>Candidatus Protochlamydia</taxon>
    </lineage>
</organism>
<gene>
    <name evidence="1" type="primary">glgB</name>
    <name type="ordered locus">pc1761</name>
</gene>
<name>GLGB_PARUW</name>
<protein>
    <recommendedName>
        <fullName evidence="1">1,4-alpha-glucan branching enzyme GlgB</fullName>
        <ecNumber evidence="1">2.4.1.18</ecNumber>
    </recommendedName>
    <alternativeName>
        <fullName evidence="1">1,4-alpha-D-glucan:1,4-alpha-D-glucan 6-glucosyl-transferase</fullName>
    </alternativeName>
    <alternativeName>
        <fullName evidence="1">Alpha-(1-&gt;4)-glucan branching enzyme</fullName>
    </alternativeName>
    <alternativeName>
        <fullName evidence="1">Glycogen branching enzyme</fullName>
        <shortName evidence="1">BE</shortName>
    </alternativeName>
</protein>
<feature type="chain" id="PRO_0000188723" description="1,4-alpha-glucan branching enzyme GlgB">
    <location>
        <begin position="1"/>
        <end position="727"/>
    </location>
</feature>
<feature type="active site" description="Nucleophile" evidence="1">
    <location>
        <position position="411"/>
    </location>
</feature>
<feature type="active site" description="Proton donor" evidence="1">
    <location>
        <position position="464"/>
    </location>
</feature>
<sequence>MMTMQQTEFDSQFNEHIYRIVHVVHHQPHAFLGLHSFFEGSKVIRLWRPNAQQIFLELFGNIVEARRIHEMGIFECIVPSHTTAIDYKIFHQNGKLHFDPYAFLPTFGEVDQYLFGKGVHYELYHQMGGRLATHQGIQGVKFAVWAPNAKSVSLIADFNHWDGKVNPMRIMGYSGVWELFVPGLQEGEKYKFEIHTQQGERILKSDPYALSSELRPATASKIANIERFQWQDQAWMEQRKAKNWTSLPMNIYEVHLGSWKKKDSNSEFLNYRELAHELTAYCLDMGFTHIELLPIQEHPLDESWGYQVSGFYAPTSRFGHPEDFQYFVNYLHQHQISLILDWVPGHFPTDAFSLARFDGSALYEHADPRQGYHPHWHTNIFNFGRHEVSNFLIANALYWLEIMHVDGLRVDAVASMLYLDYGREENEWIPNDVGGKENLQAIEFLKHLNSIVHSKCPGSLMIAEESTSFTGVTHSVEKGGLGFDLKWNMGWMNDTLRYFSKDMLFRNYHHHDLTFGLVYAFSEKFISVFSHDEVVHGKKSLLSKMPGDMWQQFANLRLLISYMICQPGKKLLFMGAEIGQWNEWNCKSGLEWFLLQFPTHAGIHKFVQEINHFYLKQPALWQKDFSHESFEWVDFADMHNSVISYVRKGGTERLLCVHNFTPLYHSDYILHLSQFEHIEEIFNSDAEKFGGSGKHNLNPEIIRNEARSVIGLRLILAPLATLIFKLS</sequence>
<evidence type="ECO:0000255" key="1">
    <source>
        <dbReference type="HAMAP-Rule" id="MF_00685"/>
    </source>
</evidence>
<reference key="1">
    <citation type="journal article" date="2004" name="Science">
        <title>Illuminating the evolutionary history of chlamydiae.</title>
        <authorList>
            <person name="Horn M."/>
            <person name="Collingro A."/>
            <person name="Schmitz-Esser S."/>
            <person name="Beier C.L."/>
            <person name="Purkhold U."/>
            <person name="Fartmann B."/>
            <person name="Brandt P."/>
            <person name="Nyakatura G.J."/>
            <person name="Droege M."/>
            <person name="Frishman D."/>
            <person name="Rattei T."/>
            <person name="Mewes H.-W."/>
            <person name="Wagner M."/>
        </authorList>
    </citation>
    <scope>NUCLEOTIDE SEQUENCE [LARGE SCALE GENOMIC DNA]</scope>
    <source>
        <strain>UWE25</strain>
    </source>
</reference>
<accession>Q6MAB4</accession>
<keyword id="KW-0119">Carbohydrate metabolism</keyword>
<keyword id="KW-0320">Glycogen biosynthesis</keyword>
<keyword id="KW-0321">Glycogen metabolism</keyword>
<keyword id="KW-0328">Glycosyltransferase</keyword>
<keyword id="KW-1185">Reference proteome</keyword>
<keyword id="KW-0808">Transferase</keyword>
<dbReference type="EC" id="2.4.1.18" evidence="1"/>
<dbReference type="EMBL" id="BX908798">
    <property type="protein sequence ID" value="CAF24485.1"/>
    <property type="molecule type" value="Genomic_DNA"/>
</dbReference>
<dbReference type="SMR" id="Q6MAB4"/>
<dbReference type="STRING" id="264201.pc1761"/>
<dbReference type="CAZy" id="CBM48">
    <property type="family name" value="Carbohydrate-Binding Module Family 48"/>
</dbReference>
<dbReference type="CAZy" id="GH13">
    <property type="family name" value="Glycoside Hydrolase Family 13"/>
</dbReference>
<dbReference type="KEGG" id="pcu:PC_RS08435"/>
<dbReference type="eggNOG" id="COG0296">
    <property type="taxonomic scope" value="Bacteria"/>
</dbReference>
<dbReference type="HOGENOM" id="CLU_004245_3_2_0"/>
<dbReference type="OrthoDB" id="9800174at2"/>
<dbReference type="UniPathway" id="UPA00164"/>
<dbReference type="Proteomes" id="UP000000529">
    <property type="component" value="Chromosome"/>
</dbReference>
<dbReference type="GO" id="GO:0005829">
    <property type="term" value="C:cytosol"/>
    <property type="evidence" value="ECO:0007669"/>
    <property type="project" value="TreeGrafter"/>
</dbReference>
<dbReference type="GO" id="GO:0003844">
    <property type="term" value="F:1,4-alpha-glucan branching enzyme activity"/>
    <property type="evidence" value="ECO:0007669"/>
    <property type="project" value="UniProtKB-UniRule"/>
</dbReference>
<dbReference type="GO" id="GO:0043169">
    <property type="term" value="F:cation binding"/>
    <property type="evidence" value="ECO:0007669"/>
    <property type="project" value="InterPro"/>
</dbReference>
<dbReference type="GO" id="GO:0004553">
    <property type="term" value="F:hydrolase activity, hydrolyzing O-glycosyl compounds"/>
    <property type="evidence" value="ECO:0007669"/>
    <property type="project" value="InterPro"/>
</dbReference>
<dbReference type="GO" id="GO:0005978">
    <property type="term" value="P:glycogen biosynthetic process"/>
    <property type="evidence" value="ECO:0007669"/>
    <property type="project" value="UniProtKB-UniRule"/>
</dbReference>
<dbReference type="CDD" id="cd11322">
    <property type="entry name" value="AmyAc_Glg_BE"/>
    <property type="match status" value="1"/>
</dbReference>
<dbReference type="CDD" id="cd02855">
    <property type="entry name" value="E_set_GBE_prok_N"/>
    <property type="match status" value="1"/>
</dbReference>
<dbReference type="FunFam" id="2.60.40.10:FF:000169">
    <property type="entry name" value="1,4-alpha-glucan branching enzyme GlgB"/>
    <property type="match status" value="1"/>
</dbReference>
<dbReference type="FunFam" id="3.20.20.80:FF:000003">
    <property type="entry name" value="1,4-alpha-glucan branching enzyme GlgB"/>
    <property type="match status" value="1"/>
</dbReference>
<dbReference type="Gene3D" id="3.20.20.80">
    <property type="entry name" value="Glycosidases"/>
    <property type="match status" value="1"/>
</dbReference>
<dbReference type="Gene3D" id="2.60.40.1180">
    <property type="entry name" value="Golgi alpha-mannosidase II"/>
    <property type="match status" value="1"/>
</dbReference>
<dbReference type="Gene3D" id="2.60.40.10">
    <property type="entry name" value="Immunoglobulins"/>
    <property type="match status" value="2"/>
</dbReference>
<dbReference type="HAMAP" id="MF_00685">
    <property type="entry name" value="GlgB"/>
    <property type="match status" value="1"/>
</dbReference>
<dbReference type="InterPro" id="IPR006048">
    <property type="entry name" value="A-amylase/branching_C"/>
</dbReference>
<dbReference type="InterPro" id="IPR037439">
    <property type="entry name" value="Branching_enzy"/>
</dbReference>
<dbReference type="InterPro" id="IPR006407">
    <property type="entry name" value="GlgB"/>
</dbReference>
<dbReference type="InterPro" id="IPR054169">
    <property type="entry name" value="GlgB_N"/>
</dbReference>
<dbReference type="InterPro" id="IPR044143">
    <property type="entry name" value="GlgB_N_E_set_prok"/>
</dbReference>
<dbReference type="InterPro" id="IPR006047">
    <property type="entry name" value="Glyco_hydro_13_cat_dom"/>
</dbReference>
<dbReference type="InterPro" id="IPR004193">
    <property type="entry name" value="Glyco_hydro_13_N"/>
</dbReference>
<dbReference type="InterPro" id="IPR013780">
    <property type="entry name" value="Glyco_hydro_b"/>
</dbReference>
<dbReference type="InterPro" id="IPR017853">
    <property type="entry name" value="Glycoside_hydrolase_SF"/>
</dbReference>
<dbReference type="InterPro" id="IPR013783">
    <property type="entry name" value="Ig-like_fold"/>
</dbReference>
<dbReference type="InterPro" id="IPR014756">
    <property type="entry name" value="Ig_E-set"/>
</dbReference>
<dbReference type="NCBIfam" id="TIGR01515">
    <property type="entry name" value="branching_enzym"/>
    <property type="match status" value="1"/>
</dbReference>
<dbReference type="NCBIfam" id="NF003811">
    <property type="entry name" value="PRK05402.1"/>
    <property type="match status" value="1"/>
</dbReference>
<dbReference type="NCBIfam" id="NF008967">
    <property type="entry name" value="PRK12313.1"/>
    <property type="match status" value="1"/>
</dbReference>
<dbReference type="PANTHER" id="PTHR43651">
    <property type="entry name" value="1,4-ALPHA-GLUCAN-BRANCHING ENZYME"/>
    <property type="match status" value="1"/>
</dbReference>
<dbReference type="PANTHER" id="PTHR43651:SF3">
    <property type="entry name" value="1,4-ALPHA-GLUCAN-BRANCHING ENZYME"/>
    <property type="match status" value="1"/>
</dbReference>
<dbReference type="Pfam" id="PF00128">
    <property type="entry name" value="Alpha-amylase"/>
    <property type="match status" value="2"/>
</dbReference>
<dbReference type="Pfam" id="PF02806">
    <property type="entry name" value="Alpha-amylase_C"/>
    <property type="match status" value="1"/>
</dbReference>
<dbReference type="Pfam" id="PF02922">
    <property type="entry name" value="CBM_48"/>
    <property type="match status" value="1"/>
</dbReference>
<dbReference type="Pfam" id="PF22019">
    <property type="entry name" value="GlgB_N"/>
    <property type="match status" value="1"/>
</dbReference>
<dbReference type="PIRSF" id="PIRSF000463">
    <property type="entry name" value="GlgB"/>
    <property type="match status" value="1"/>
</dbReference>
<dbReference type="SMART" id="SM00642">
    <property type="entry name" value="Aamy"/>
    <property type="match status" value="1"/>
</dbReference>
<dbReference type="SUPFAM" id="SSF51445">
    <property type="entry name" value="(Trans)glycosidases"/>
    <property type="match status" value="1"/>
</dbReference>
<dbReference type="SUPFAM" id="SSF81296">
    <property type="entry name" value="E set domains"/>
    <property type="match status" value="2"/>
</dbReference>
<dbReference type="SUPFAM" id="SSF51011">
    <property type="entry name" value="Glycosyl hydrolase domain"/>
    <property type="match status" value="1"/>
</dbReference>
<comment type="function">
    <text evidence="1">Catalyzes the formation of the alpha-1,6-glucosidic linkages in glycogen by scission of a 1,4-alpha-linked oligosaccharide from growing alpha-1,4-glucan chains and the subsequent attachment of the oligosaccharide to the alpha-1,6 position.</text>
</comment>
<comment type="catalytic activity">
    <reaction evidence="1">
        <text>Transfers a segment of a (1-&gt;4)-alpha-D-glucan chain to a primary hydroxy group in a similar glucan chain.</text>
        <dbReference type="EC" id="2.4.1.18"/>
    </reaction>
</comment>
<comment type="pathway">
    <text evidence="1">Glycan biosynthesis; glycogen biosynthesis.</text>
</comment>
<comment type="subunit">
    <text evidence="1">Monomer.</text>
</comment>
<comment type="similarity">
    <text evidence="1">Belongs to the glycosyl hydrolase 13 family. GlgB subfamily.</text>
</comment>
<proteinExistence type="inferred from homology"/>